<organism>
    <name type="scientific">Serratia proteamaculans (strain 568)</name>
    <dbReference type="NCBI Taxonomy" id="399741"/>
    <lineage>
        <taxon>Bacteria</taxon>
        <taxon>Pseudomonadati</taxon>
        <taxon>Pseudomonadota</taxon>
        <taxon>Gammaproteobacteria</taxon>
        <taxon>Enterobacterales</taxon>
        <taxon>Yersiniaceae</taxon>
        <taxon>Serratia</taxon>
    </lineage>
</organism>
<sequence length="180" mass="20527">MSGLTIFSDQEPQQPLWQSRDAQAIGQQLAQIGVRFERWQADRELGENPDPAVVIAAYQHQIDRLVAEKGYQSWDVISMRPDNAQREVLRSKFLSEHTHGEDEVRFFVEGAGLFCLHLDGKIFQILCEKNDLISVPANTRHWFDMGSAPNFTAIRVFDNPEGWVAHFTGDNIADAYPRLD</sequence>
<accession>A8GAB0</accession>
<protein>
    <recommendedName>
        <fullName evidence="1">Acireductone dioxygenase</fullName>
    </recommendedName>
    <alternativeName>
        <fullName evidence="1">1,2-dihydroxy-3-keto-5-methylthiopentene dioxygenase</fullName>
        <shortName evidence="1">DHK-MTPene dioxygenase</shortName>
    </alternativeName>
    <alternativeName>
        <fullName evidence="1">Acireductone dioxygenase (Fe(2+)-requiring)</fullName>
        <shortName evidence="1">ARD'</shortName>
        <shortName evidence="1">Fe-ARD</shortName>
        <ecNumber evidence="1">1.13.11.54</ecNumber>
    </alternativeName>
    <alternativeName>
        <fullName evidence="1">Acireductone dioxygenase (Ni(2+)-requiring)</fullName>
        <shortName evidence="1">ARD</shortName>
        <shortName evidence="1">Ni-ARD</shortName>
        <ecNumber evidence="1">1.13.11.53</ecNumber>
    </alternativeName>
</protein>
<dbReference type="EC" id="1.13.11.54" evidence="1"/>
<dbReference type="EC" id="1.13.11.53" evidence="1"/>
<dbReference type="EMBL" id="CP000826">
    <property type="protein sequence ID" value="ABV40050.1"/>
    <property type="molecule type" value="Genomic_DNA"/>
</dbReference>
<dbReference type="SMR" id="A8GAB0"/>
<dbReference type="STRING" id="399741.Spro_0944"/>
<dbReference type="KEGG" id="spe:Spro_0944"/>
<dbReference type="eggNOG" id="COG1791">
    <property type="taxonomic scope" value="Bacteria"/>
</dbReference>
<dbReference type="HOGENOM" id="CLU_125400_0_0_6"/>
<dbReference type="OrthoDB" id="9795636at2"/>
<dbReference type="UniPathway" id="UPA00904">
    <property type="reaction ID" value="UER00878"/>
</dbReference>
<dbReference type="GO" id="GO:0010308">
    <property type="term" value="F:acireductone dioxygenase (Ni2+-requiring) activity"/>
    <property type="evidence" value="ECO:0007669"/>
    <property type="project" value="UniProtKB-UniRule"/>
</dbReference>
<dbReference type="GO" id="GO:0010309">
    <property type="term" value="F:acireductone dioxygenase [iron(II)-requiring] activity"/>
    <property type="evidence" value="ECO:0007669"/>
    <property type="project" value="UniProtKB-UniRule"/>
</dbReference>
<dbReference type="GO" id="GO:0005506">
    <property type="term" value="F:iron ion binding"/>
    <property type="evidence" value="ECO:0007669"/>
    <property type="project" value="UniProtKB-UniRule"/>
</dbReference>
<dbReference type="GO" id="GO:0016151">
    <property type="term" value="F:nickel cation binding"/>
    <property type="evidence" value="ECO:0007669"/>
    <property type="project" value="UniProtKB-UniRule"/>
</dbReference>
<dbReference type="GO" id="GO:0019509">
    <property type="term" value="P:L-methionine salvage from methylthioadenosine"/>
    <property type="evidence" value="ECO:0007669"/>
    <property type="project" value="UniProtKB-UniRule"/>
</dbReference>
<dbReference type="GO" id="GO:0019284">
    <property type="term" value="P:L-methionine salvage from S-adenosylmethionine"/>
    <property type="evidence" value="ECO:0007669"/>
    <property type="project" value="InterPro"/>
</dbReference>
<dbReference type="CDD" id="cd02232">
    <property type="entry name" value="cupin_ARD"/>
    <property type="match status" value="1"/>
</dbReference>
<dbReference type="Gene3D" id="2.60.120.10">
    <property type="entry name" value="Jelly Rolls"/>
    <property type="match status" value="1"/>
</dbReference>
<dbReference type="HAMAP" id="MF_01682">
    <property type="entry name" value="Salvage_MtnD"/>
    <property type="match status" value="1"/>
</dbReference>
<dbReference type="InterPro" id="IPR004313">
    <property type="entry name" value="ARD"/>
</dbReference>
<dbReference type="InterPro" id="IPR023956">
    <property type="entry name" value="ARD_bac"/>
</dbReference>
<dbReference type="InterPro" id="IPR014710">
    <property type="entry name" value="RmlC-like_jellyroll"/>
</dbReference>
<dbReference type="InterPro" id="IPR011051">
    <property type="entry name" value="RmlC_Cupin_sf"/>
</dbReference>
<dbReference type="PANTHER" id="PTHR23418">
    <property type="entry name" value="ACIREDUCTONE DIOXYGENASE"/>
    <property type="match status" value="1"/>
</dbReference>
<dbReference type="PANTHER" id="PTHR23418:SF0">
    <property type="entry name" value="ACIREDUCTONE DIOXYGENASE"/>
    <property type="match status" value="1"/>
</dbReference>
<dbReference type="Pfam" id="PF03079">
    <property type="entry name" value="ARD"/>
    <property type="match status" value="1"/>
</dbReference>
<dbReference type="SUPFAM" id="SSF51182">
    <property type="entry name" value="RmlC-like cupins"/>
    <property type="match status" value="1"/>
</dbReference>
<comment type="function">
    <text evidence="1">Catalyzes 2 different reactions between oxygen and the acireductone 1,2-dihydroxy-3-keto-5-methylthiopentene (DHK-MTPene) depending upon the metal bound in the active site. Fe-containing acireductone dioxygenase (Fe-ARD) produces formate and 2-keto-4-methylthiobutyrate (KMTB), the alpha-ketoacid precursor of methionine in the methionine recycle pathway. Ni-containing acireductone dioxygenase (Ni-ARD) produces methylthiopropionate, carbon monoxide and formate, and does not lie on the methionine recycle pathway.</text>
</comment>
<comment type="catalytic activity">
    <reaction evidence="1">
        <text>1,2-dihydroxy-5-(methylsulfanyl)pent-1-en-3-one + O2 = 3-(methylsulfanyl)propanoate + CO + formate + 2 H(+)</text>
        <dbReference type="Rhea" id="RHEA:14161"/>
        <dbReference type="ChEBI" id="CHEBI:15378"/>
        <dbReference type="ChEBI" id="CHEBI:15379"/>
        <dbReference type="ChEBI" id="CHEBI:15740"/>
        <dbReference type="ChEBI" id="CHEBI:17245"/>
        <dbReference type="ChEBI" id="CHEBI:49016"/>
        <dbReference type="ChEBI" id="CHEBI:49252"/>
        <dbReference type="EC" id="1.13.11.53"/>
    </reaction>
</comment>
<comment type="catalytic activity">
    <reaction evidence="1">
        <text>1,2-dihydroxy-5-(methylsulfanyl)pent-1-en-3-one + O2 = 4-methylsulfanyl-2-oxobutanoate + formate + 2 H(+)</text>
        <dbReference type="Rhea" id="RHEA:24504"/>
        <dbReference type="ChEBI" id="CHEBI:15378"/>
        <dbReference type="ChEBI" id="CHEBI:15379"/>
        <dbReference type="ChEBI" id="CHEBI:15740"/>
        <dbReference type="ChEBI" id="CHEBI:16723"/>
        <dbReference type="ChEBI" id="CHEBI:49252"/>
        <dbReference type="EC" id="1.13.11.54"/>
    </reaction>
</comment>
<comment type="cofactor">
    <cofactor evidence="1">
        <name>Fe(2+)</name>
        <dbReference type="ChEBI" id="CHEBI:29033"/>
    </cofactor>
    <text evidence="1">Binds 1 Fe(2+) cation per monomer.</text>
</comment>
<comment type="cofactor">
    <cofactor evidence="1">
        <name>Ni(2+)</name>
        <dbReference type="ChEBI" id="CHEBI:49786"/>
    </cofactor>
    <text evidence="1">Binds 1 nickel ion per monomer.</text>
</comment>
<comment type="pathway">
    <text evidence="1">Amino-acid biosynthesis; L-methionine biosynthesis via salvage pathway; L-methionine from S-methyl-5-thio-alpha-D-ribose 1-phosphate: step 5/6.</text>
</comment>
<comment type="subunit">
    <text evidence="1">Monomer.</text>
</comment>
<comment type="similarity">
    <text evidence="1">Belongs to the acireductone dioxygenase (ARD) family.</text>
</comment>
<keyword id="KW-0028">Amino-acid biosynthesis</keyword>
<keyword id="KW-0223">Dioxygenase</keyword>
<keyword id="KW-0408">Iron</keyword>
<keyword id="KW-0479">Metal-binding</keyword>
<keyword id="KW-0486">Methionine biosynthesis</keyword>
<keyword id="KW-0533">Nickel</keyword>
<keyword id="KW-0560">Oxidoreductase</keyword>
<name>MTND_SERP5</name>
<proteinExistence type="inferred from homology"/>
<gene>
    <name evidence="1" type="primary">mtnD</name>
    <name type="ordered locus">Spro_0944</name>
</gene>
<evidence type="ECO:0000255" key="1">
    <source>
        <dbReference type="HAMAP-Rule" id="MF_01682"/>
    </source>
</evidence>
<reference key="1">
    <citation type="submission" date="2007-09" db="EMBL/GenBank/DDBJ databases">
        <title>Complete sequence of chromosome of Serratia proteamaculans 568.</title>
        <authorList>
            <consortium name="US DOE Joint Genome Institute"/>
            <person name="Copeland A."/>
            <person name="Lucas S."/>
            <person name="Lapidus A."/>
            <person name="Barry K."/>
            <person name="Glavina del Rio T."/>
            <person name="Dalin E."/>
            <person name="Tice H."/>
            <person name="Pitluck S."/>
            <person name="Chain P."/>
            <person name="Malfatti S."/>
            <person name="Shin M."/>
            <person name="Vergez L."/>
            <person name="Schmutz J."/>
            <person name="Larimer F."/>
            <person name="Land M."/>
            <person name="Hauser L."/>
            <person name="Kyrpides N."/>
            <person name="Kim E."/>
            <person name="Taghavi S."/>
            <person name="Newman L."/>
            <person name="Vangronsveld J."/>
            <person name="van der Lelie D."/>
            <person name="Richardson P."/>
        </authorList>
    </citation>
    <scope>NUCLEOTIDE SEQUENCE [LARGE SCALE GENOMIC DNA]</scope>
    <source>
        <strain>568</strain>
    </source>
</reference>
<feature type="chain" id="PRO_0000359229" description="Acireductone dioxygenase">
    <location>
        <begin position="1"/>
        <end position="180"/>
    </location>
</feature>
<feature type="binding site" evidence="1">
    <location>
        <position position="97"/>
    </location>
    <ligand>
        <name>Fe(2+)</name>
        <dbReference type="ChEBI" id="CHEBI:29033"/>
    </ligand>
</feature>
<feature type="binding site" evidence="1">
    <location>
        <position position="97"/>
    </location>
    <ligand>
        <name>Ni(2+)</name>
        <dbReference type="ChEBI" id="CHEBI:49786"/>
    </ligand>
</feature>
<feature type="binding site" evidence="1">
    <location>
        <position position="99"/>
    </location>
    <ligand>
        <name>Fe(2+)</name>
        <dbReference type="ChEBI" id="CHEBI:29033"/>
    </ligand>
</feature>
<feature type="binding site" evidence="1">
    <location>
        <position position="99"/>
    </location>
    <ligand>
        <name>Ni(2+)</name>
        <dbReference type="ChEBI" id="CHEBI:49786"/>
    </ligand>
</feature>
<feature type="binding site" evidence="1">
    <location>
        <position position="103"/>
    </location>
    <ligand>
        <name>Fe(2+)</name>
        <dbReference type="ChEBI" id="CHEBI:29033"/>
    </ligand>
</feature>
<feature type="binding site" evidence="1">
    <location>
        <position position="103"/>
    </location>
    <ligand>
        <name>Ni(2+)</name>
        <dbReference type="ChEBI" id="CHEBI:49786"/>
    </ligand>
</feature>
<feature type="binding site" evidence="1">
    <location>
        <position position="141"/>
    </location>
    <ligand>
        <name>Fe(2+)</name>
        <dbReference type="ChEBI" id="CHEBI:29033"/>
    </ligand>
</feature>
<feature type="binding site" evidence="1">
    <location>
        <position position="141"/>
    </location>
    <ligand>
        <name>Ni(2+)</name>
        <dbReference type="ChEBI" id="CHEBI:49786"/>
    </ligand>
</feature>
<feature type="site" description="May play a role in metal incorporation in vivo" evidence="1">
    <location>
        <position position="96"/>
    </location>
</feature>
<feature type="site" description="May play a role in transmitting local conformational changes" evidence="1">
    <location>
        <position position="102"/>
    </location>
</feature>
<feature type="site" description="Important to generate the dianion" evidence="1">
    <location>
        <position position="105"/>
    </location>
</feature>